<sequence length="284" mass="32469">MTDKMQSLALAPVGNLDSYIRAANAWPMLSADEERALAEKLHYHGDLEAAKTLILSHLRFVVHIARNYAGYGLPQADLIQEGNIGLMKAVRRFNPEVGVRLVSFAVHWIKAEIHEYVLRNWRIVKVATTKAQRKLFFNLRKTKQRLGWFNQDEVEMVARELGVTSKDVREMESRMAAQDMTFDLSSDDDSDSQPMAPVLYLQDKSSNFADGIEDDNWEEQAANRLTDAMQGLDERSQDIIRARWLDEDNKSTLQELADRYGVSAERVRQLEKNAMKKLRAAIEA</sequence>
<comment type="function">
    <text evidence="1">Sigma factors are initiation factors that promote the attachment of RNA polymerase to specific initiation sites and are then released. This sigma factor is involved in regulation of expression of heat shock genes.</text>
</comment>
<comment type="subunit">
    <text evidence="1">Interacts with the RNA polymerase core enzyme.</text>
</comment>
<comment type="subcellular location">
    <subcellularLocation>
        <location evidence="1">Cytoplasm</location>
    </subcellularLocation>
</comment>
<comment type="similarity">
    <text evidence="1">Belongs to the sigma-70 factor family. RpoH subfamily.</text>
</comment>
<name>RPOH_ECOL6</name>
<organism>
    <name type="scientific">Escherichia coli O6:H1 (strain CFT073 / ATCC 700928 / UPEC)</name>
    <dbReference type="NCBI Taxonomy" id="199310"/>
    <lineage>
        <taxon>Bacteria</taxon>
        <taxon>Pseudomonadati</taxon>
        <taxon>Pseudomonadota</taxon>
        <taxon>Gammaproteobacteria</taxon>
        <taxon>Enterobacterales</taxon>
        <taxon>Enterobacteriaceae</taxon>
        <taxon>Escherichia</taxon>
    </lineage>
</organism>
<evidence type="ECO:0000255" key="1">
    <source>
        <dbReference type="HAMAP-Rule" id="MF_00961"/>
    </source>
</evidence>
<protein>
    <recommendedName>
        <fullName evidence="1">RNA polymerase sigma factor RpoH</fullName>
    </recommendedName>
    <alternativeName>
        <fullName evidence="1">RNA polymerase sigma-32 factor</fullName>
    </alternativeName>
</protein>
<proteinExistence type="inferred from homology"/>
<accession>P0AGB4</accession>
<accession>P00580</accession>
<reference key="1">
    <citation type="journal article" date="2002" name="Proc. Natl. Acad. Sci. U.S.A.">
        <title>Extensive mosaic structure revealed by the complete genome sequence of uropathogenic Escherichia coli.</title>
        <authorList>
            <person name="Welch R.A."/>
            <person name="Burland V."/>
            <person name="Plunkett G. III"/>
            <person name="Redford P."/>
            <person name="Roesch P."/>
            <person name="Rasko D."/>
            <person name="Buckles E.L."/>
            <person name="Liou S.-R."/>
            <person name="Boutin A."/>
            <person name="Hackett J."/>
            <person name="Stroud D."/>
            <person name="Mayhew G.F."/>
            <person name="Rose D.J."/>
            <person name="Zhou S."/>
            <person name="Schwartz D.C."/>
            <person name="Perna N.T."/>
            <person name="Mobley H.L.T."/>
            <person name="Donnenberg M.S."/>
            <person name="Blattner F.R."/>
        </authorList>
    </citation>
    <scope>NUCLEOTIDE SEQUENCE [LARGE SCALE GENOMIC DNA]</scope>
    <source>
        <strain>CFT073 / ATCC 700928 / UPEC</strain>
    </source>
</reference>
<dbReference type="EMBL" id="AE014075">
    <property type="protein sequence ID" value="AAN82690.1"/>
    <property type="molecule type" value="Genomic_DNA"/>
</dbReference>
<dbReference type="RefSeq" id="WP_000130217.1">
    <property type="nucleotide sequence ID" value="NZ_CP051263.1"/>
</dbReference>
<dbReference type="SMR" id="P0AGB4"/>
<dbReference type="STRING" id="199310.c4254"/>
<dbReference type="GeneID" id="93778530"/>
<dbReference type="KEGG" id="ecc:c4254"/>
<dbReference type="eggNOG" id="COG0568">
    <property type="taxonomic scope" value="Bacteria"/>
</dbReference>
<dbReference type="HOGENOM" id="CLU_014793_3_5_6"/>
<dbReference type="BioCyc" id="ECOL199310:C4254-MONOMER"/>
<dbReference type="Proteomes" id="UP000001410">
    <property type="component" value="Chromosome"/>
</dbReference>
<dbReference type="GO" id="GO:0005737">
    <property type="term" value="C:cytoplasm"/>
    <property type="evidence" value="ECO:0007669"/>
    <property type="project" value="UniProtKB-SubCell"/>
</dbReference>
<dbReference type="GO" id="GO:0003677">
    <property type="term" value="F:DNA binding"/>
    <property type="evidence" value="ECO:0007669"/>
    <property type="project" value="UniProtKB-UniRule"/>
</dbReference>
<dbReference type="GO" id="GO:0016987">
    <property type="term" value="F:sigma factor activity"/>
    <property type="evidence" value="ECO:0007669"/>
    <property type="project" value="UniProtKB-UniRule"/>
</dbReference>
<dbReference type="GO" id="GO:0006352">
    <property type="term" value="P:DNA-templated transcription initiation"/>
    <property type="evidence" value="ECO:0007669"/>
    <property type="project" value="UniProtKB-UniRule"/>
</dbReference>
<dbReference type="GO" id="GO:0009408">
    <property type="term" value="P:response to heat"/>
    <property type="evidence" value="ECO:0007669"/>
    <property type="project" value="UniProtKB-UniRule"/>
</dbReference>
<dbReference type="CDD" id="cd06171">
    <property type="entry name" value="Sigma70_r4"/>
    <property type="match status" value="1"/>
</dbReference>
<dbReference type="FunFam" id="1.10.10.10:FF:000285">
    <property type="entry name" value="RNA polymerase sigma factor RpoH"/>
    <property type="match status" value="1"/>
</dbReference>
<dbReference type="FunFam" id="1.20.120.1810:FF:000001">
    <property type="entry name" value="RNA polymerase sigma factor RpoH"/>
    <property type="match status" value="1"/>
</dbReference>
<dbReference type="FunFam" id="1.20.140.160:FF:000002">
    <property type="entry name" value="RNA polymerase sigma factor RpoH"/>
    <property type="match status" value="1"/>
</dbReference>
<dbReference type="Gene3D" id="1.20.120.1810">
    <property type="match status" value="1"/>
</dbReference>
<dbReference type="Gene3D" id="1.20.140.160">
    <property type="match status" value="1"/>
</dbReference>
<dbReference type="HAMAP" id="MF_00961">
    <property type="entry name" value="Sigma70_RpoH"/>
    <property type="match status" value="1"/>
</dbReference>
<dbReference type="InterPro" id="IPR014284">
    <property type="entry name" value="RNA_pol_sigma-70_dom"/>
</dbReference>
<dbReference type="InterPro" id="IPR000943">
    <property type="entry name" value="RNA_pol_sigma70"/>
</dbReference>
<dbReference type="InterPro" id="IPR007627">
    <property type="entry name" value="RNA_pol_sigma70_r2"/>
</dbReference>
<dbReference type="InterPro" id="IPR007630">
    <property type="entry name" value="RNA_pol_sigma70_r4"/>
</dbReference>
<dbReference type="InterPro" id="IPR013325">
    <property type="entry name" value="RNA_pol_sigma_r2"/>
</dbReference>
<dbReference type="InterPro" id="IPR013324">
    <property type="entry name" value="RNA_pol_sigma_r3/r4-like"/>
</dbReference>
<dbReference type="InterPro" id="IPR012759">
    <property type="entry name" value="RNA_pol_sigma_RpoH_proteobac"/>
</dbReference>
<dbReference type="InterPro" id="IPR050813">
    <property type="entry name" value="Sigma-70_Factor"/>
</dbReference>
<dbReference type="NCBIfam" id="NF005143">
    <property type="entry name" value="PRK06596.1"/>
    <property type="match status" value="1"/>
</dbReference>
<dbReference type="NCBIfam" id="TIGR02392">
    <property type="entry name" value="rpoH_proteo"/>
    <property type="match status" value="1"/>
</dbReference>
<dbReference type="NCBIfam" id="TIGR02937">
    <property type="entry name" value="sigma70-ECF"/>
    <property type="match status" value="1"/>
</dbReference>
<dbReference type="PANTHER" id="PTHR30376:SF3">
    <property type="entry name" value="RNA POLYMERASE SIGMA FACTOR RPOH"/>
    <property type="match status" value="1"/>
</dbReference>
<dbReference type="PANTHER" id="PTHR30376">
    <property type="entry name" value="SIGMA FACTOR RPOH HEAT SHOCK RELATED"/>
    <property type="match status" value="1"/>
</dbReference>
<dbReference type="Pfam" id="PF04542">
    <property type="entry name" value="Sigma70_r2"/>
    <property type="match status" value="1"/>
</dbReference>
<dbReference type="Pfam" id="PF04545">
    <property type="entry name" value="Sigma70_r4"/>
    <property type="match status" value="1"/>
</dbReference>
<dbReference type="PIRSF" id="PIRSF000770">
    <property type="entry name" value="RNA_pol_sigma-SigE/K"/>
    <property type="match status" value="1"/>
</dbReference>
<dbReference type="PRINTS" id="PR00046">
    <property type="entry name" value="SIGMA70FCT"/>
</dbReference>
<dbReference type="SUPFAM" id="SSF88946">
    <property type="entry name" value="Sigma2 domain of RNA polymerase sigma factors"/>
    <property type="match status" value="1"/>
</dbReference>
<dbReference type="SUPFAM" id="SSF88659">
    <property type="entry name" value="Sigma3 and sigma4 domains of RNA polymerase sigma factors"/>
    <property type="match status" value="1"/>
</dbReference>
<dbReference type="PROSITE" id="PS00715">
    <property type="entry name" value="SIGMA70_1"/>
    <property type="match status" value="1"/>
</dbReference>
<dbReference type="PROSITE" id="PS00716">
    <property type="entry name" value="SIGMA70_2"/>
    <property type="match status" value="1"/>
</dbReference>
<gene>
    <name evidence="1" type="primary">rpoH</name>
    <name type="ordered locus">c4254</name>
</gene>
<feature type="chain" id="PRO_0000093959" description="RNA polymerase sigma factor RpoH">
    <location>
        <begin position="1"/>
        <end position="284"/>
    </location>
</feature>
<feature type="DNA-binding region" description="H-T-H motif" evidence="1">
    <location>
        <begin position="253"/>
        <end position="272"/>
    </location>
</feature>
<feature type="region of interest" description="Sigma-70 factor domain-2" evidence="1">
    <location>
        <begin position="53"/>
        <end position="122"/>
    </location>
</feature>
<feature type="region of interest" description="Sigma-70 factor domain-4" evidence="1">
    <location>
        <begin position="228"/>
        <end position="280"/>
    </location>
</feature>
<feature type="short sequence motif" description="Interaction with polymerase core subunit RpoC">
    <location>
        <begin position="77"/>
        <end position="80"/>
    </location>
</feature>
<keyword id="KW-0963">Cytoplasm</keyword>
<keyword id="KW-0238">DNA-binding</keyword>
<keyword id="KW-1185">Reference proteome</keyword>
<keyword id="KW-0731">Sigma factor</keyword>
<keyword id="KW-0346">Stress response</keyword>
<keyword id="KW-0804">Transcription</keyword>
<keyword id="KW-0805">Transcription regulation</keyword>